<organism>
    <name type="scientific">Paraburkholderia xenovorans (strain LB400)</name>
    <dbReference type="NCBI Taxonomy" id="266265"/>
    <lineage>
        <taxon>Bacteria</taxon>
        <taxon>Pseudomonadati</taxon>
        <taxon>Pseudomonadota</taxon>
        <taxon>Betaproteobacteria</taxon>
        <taxon>Burkholderiales</taxon>
        <taxon>Burkholderiaceae</taxon>
        <taxon>Paraburkholderia</taxon>
    </lineage>
</organism>
<gene>
    <name type="ordered locus">Bxeno_A2905</name>
    <name type="ORF">Bxe_A1511</name>
</gene>
<keyword id="KW-0408">Iron</keyword>
<keyword id="KW-1185">Reference proteome</keyword>
<protein>
    <recommendedName>
        <fullName evidence="1">Probable Fe(2+)-trafficking protein</fullName>
    </recommendedName>
</protein>
<reference key="1">
    <citation type="journal article" date="2006" name="Proc. Natl. Acad. Sci. U.S.A.">
        <title>Burkholderia xenovorans LB400 harbors a multi-replicon, 9.73-Mbp genome shaped for versatility.</title>
        <authorList>
            <person name="Chain P.S.G."/>
            <person name="Denef V.J."/>
            <person name="Konstantinidis K.T."/>
            <person name="Vergez L.M."/>
            <person name="Agullo L."/>
            <person name="Reyes V.L."/>
            <person name="Hauser L."/>
            <person name="Cordova M."/>
            <person name="Gomez L."/>
            <person name="Gonzalez M."/>
            <person name="Land M."/>
            <person name="Lao V."/>
            <person name="Larimer F."/>
            <person name="LiPuma J.J."/>
            <person name="Mahenthiralingam E."/>
            <person name="Malfatti S.A."/>
            <person name="Marx C.J."/>
            <person name="Parnell J.J."/>
            <person name="Ramette A."/>
            <person name="Richardson P."/>
            <person name="Seeger M."/>
            <person name="Smith D."/>
            <person name="Spilker T."/>
            <person name="Sul W.J."/>
            <person name="Tsoi T.V."/>
            <person name="Ulrich L.E."/>
            <person name="Zhulin I.B."/>
            <person name="Tiedje J.M."/>
        </authorList>
    </citation>
    <scope>NUCLEOTIDE SEQUENCE [LARGE SCALE GENOMIC DNA]</scope>
    <source>
        <strain>LB400</strain>
    </source>
</reference>
<feature type="chain" id="PRO_1000045028" description="Probable Fe(2+)-trafficking protein">
    <location>
        <begin position="1"/>
        <end position="90"/>
    </location>
</feature>
<proteinExistence type="inferred from homology"/>
<sequence>MTRMVQCAKLGKEAEGLDFPPLPGELGKRIYESISKEAWQAWLKQQTMLINENRLNMADPRARQYLMKQTEKFFFGEGADTAQGYVPPSA</sequence>
<comment type="function">
    <text evidence="1">Could be a mediator in iron transactions between iron acquisition and iron-requiring processes, such as synthesis and/or repair of Fe-S clusters in biosynthetic enzymes.</text>
</comment>
<comment type="similarity">
    <text evidence="1">Belongs to the Fe(2+)-trafficking protein family.</text>
</comment>
<dbReference type="EMBL" id="CP000270">
    <property type="protein sequence ID" value="ABE31443.1"/>
    <property type="molecule type" value="Genomic_DNA"/>
</dbReference>
<dbReference type="RefSeq" id="WP_007181244.1">
    <property type="nucleotide sequence ID" value="NZ_CP008760.1"/>
</dbReference>
<dbReference type="SMR" id="Q13WU6"/>
<dbReference type="STRING" id="266265.Bxe_A1511"/>
<dbReference type="KEGG" id="bxb:DR64_3673"/>
<dbReference type="KEGG" id="bxe:Bxe_A1511"/>
<dbReference type="eggNOG" id="COG2924">
    <property type="taxonomic scope" value="Bacteria"/>
</dbReference>
<dbReference type="OrthoDB" id="9804318at2"/>
<dbReference type="Proteomes" id="UP000001817">
    <property type="component" value="Chromosome 1"/>
</dbReference>
<dbReference type="GO" id="GO:0005829">
    <property type="term" value="C:cytosol"/>
    <property type="evidence" value="ECO:0007669"/>
    <property type="project" value="TreeGrafter"/>
</dbReference>
<dbReference type="GO" id="GO:0005506">
    <property type="term" value="F:iron ion binding"/>
    <property type="evidence" value="ECO:0007669"/>
    <property type="project" value="UniProtKB-UniRule"/>
</dbReference>
<dbReference type="GO" id="GO:0034599">
    <property type="term" value="P:cellular response to oxidative stress"/>
    <property type="evidence" value="ECO:0007669"/>
    <property type="project" value="TreeGrafter"/>
</dbReference>
<dbReference type="FunFam" id="1.10.3880.10:FF:000001">
    <property type="entry name" value="Probable Fe(2+)-trafficking protein"/>
    <property type="match status" value="1"/>
</dbReference>
<dbReference type="Gene3D" id="1.10.3880.10">
    <property type="entry name" value="Fe(II) trafficking protein YggX"/>
    <property type="match status" value="1"/>
</dbReference>
<dbReference type="HAMAP" id="MF_00686">
    <property type="entry name" value="Fe_traffic_YggX"/>
    <property type="match status" value="1"/>
</dbReference>
<dbReference type="InterPro" id="IPR007457">
    <property type="entry name" value="Fe_traffick_prot_YggX"/>
</dbReference>
<dbReference type="InterPro" id="IPR036766">
    <property type="entry name" value="Fe_traffick_prot_YggX_sf"/>
</dbReference>
<dbReference type="NCBIfam" id="NF003817">
    <property type="entry name" value="PRK05408.1"/>
    <property type="match status" value="1"/>
</dbReference>
<dbReference type="PANTHER" id="PTHR36965">
    <property type="entry name" value="FE(2+)-TRAFFICKING PROTEIN-RELATED"/>
    <property type="match status" value="1"/>
</dbReference>
<dbReference type="PANTHER" id="PTHR36965:SF1">
    <property type="entry name" value="FE(2+)-TRAFFICKING PROTEIN-RELATED"/>
    <property type="match status" value="1"/>
</dbReference>
<dbReference type="Pfam" id="PF04362">
    <property type="entry name" value="Iron_traffic"/>
    <property type="match status" value="1"/>
</dbReference>
<dbReference type="PIRSF" id="PIRSF029827">
    <property type="entry name" value="Fe_traffic_YggX"/>
    <property type="match status" value="1"/>
</dbReference>
<dbReference type="SUPFAM" id="SSF111148">
    <property type="entry name" value="YggX-like"/>
    <property type="match status" value="1"/>
</dbReference>
<name>FETP_PARXL</name>
<accession>Q13WU6</accession>
<evidence type="ECO:0000255" key="1">
    <source>
        <dbReference type="HAMAP-Rule" id="MF_00686"/>
    </source>
</evidence>